<evidence type="ECO:0000250" key="1"/>
<evidence type="ECO:0000256" key="2">
    <source>
        <dbReference type="SAM" id="MobiDB-lite"/>
    </source>
</evidence>
<evidence type="ECO:0000269" key="3">
    <source ref="1"/>
</evidence>
<dbReference type="EMBL" id="AJ277494">
    <property type="protein sequence ID" value="CAC16699.1"/>
    <property type="molecule type" value="Genomic_DNA"/>
</dbReference>
<dbReference type="RefSeq" id="WP_011282444.1">
    <property type="nucleotide sequence ID" value="NZ_CP166926.2"/>
</dbReference>
<dbReference type="SMR" id="Q9F3T6"/>
<dbReference type="OMA" id="DNAKHAR"/>
<dbReference type="GO" id="GO:0005576">
    <property type="term" value="C:extracellular region"/>
    <property type="evidence" value="ECO:0007669"/>
    <property type="project" value="UniProtKB-SubCell"/>
</dbReference>
<dbReference type="GO" id="GO:0052040">
    <property type="term" value="P:symbiont-mediated perturbation of host programmed cell death"/>
    <property type="evidence" value="ECO:0007669"/>
    <property type="project" value="UniProtKB-KW"/>
</dbReference>
<dbReference type="InterPro" id="IPR053430">
    <property type="entry name" value="Plant_immune_effector"/>
</dbReference>
<dbReference type="NCBIfam" id="NF041309">
    <property type="entry name" value="XopB"/>
    <property type="match status" value="1"/>
</dbReference>
<reference key="1">
    <citation type="journal article" date="2001" name="Physiol. Mol. Plant Pathol.">
        <title>Molecular characterisation of avrPphD, a widely-distributed gene from Pseudomonas syringae pv. phaseolicola involved in non-host recognition by pea (Pisum sativum).</title>
        <authorList>
            <person name="Arnold D.L."/>
            <person name="Gibbon M.J."/>
            <person name="Jackson R.W."/>
            <person name="Wood J.R."/>
            <person name="Brown J."/>
            <person name="Mansfield J.W."/>
            <person name="Taylor J.D."/>
            <person name="Vivian A."/>
        </authorList>
        <dbReference type="AGRICOLA" id="IND23220194"/>
    </citation>
    <scope>NUCLEOTIDE SEQUENCE [GENOMIC DNA]</scope>
    <scope>FUNCTION</scope>
    <source>
        <strain>1449B / Race 7</strain>
    </source>
</reference>
<feature type="chain" id="PRO_0000064774" description="Effector protein AvrPphD">
    <location>
        <begin position="1"/>
        <end position="710"/>
    </location>
</feature>
<feature type="region of interest" description="Disordered" evidence="2">
    <location>
        <begin position="1"/>
        <end position="36"/>
    </location>
</feature>
<feature type="region of interest" description="Disordered" evidence="2">
    <location>
        <begin position="136"/>
        <end position="155"/>
    </location>
</feature>
<feature type="region of interest" description="Disordered" evidence="2">
    <location>
        <begin position="173"/>
        <end position="207"/>
    </location>
</feature>
<feature type="compositionally biased region" description="Polar residues" evidence="2">
    <location>
        <begin position="1"/>
        <end position="15"/>
    </location>
</feature>
<gene>
    <name type="primary">avrPphD</name>
    <name type="synonym">avrPphD1</name>
</gene>
<protein>
    <recommendedName>
        <fullName>Effector protein AvrPphD</fullName>
    </recommendedName>
</protein>
<sequence length="710" mass="75405">MNPLRSIQHNITTPPISGGQPLDAVGPQAQQSHPKRISPSQLSQSAHQALERLSANAEHQRLASLVRNALQDGTFQFQSSNHTQVTYKASICLPADTDTVRTDHLINNELTVQARLNDQSEYDIVSAHLHGSSKAISFDVPSPPPAHGSASSVLSERTHLGMSSVLSQDAVDSSSLETPLVSSPDHSRPPSQPKPVHIGSVRRDSGSLVSDNPVVQALLSFVQADQAFPPQAASIAGVQLEMRSRRDIEQALEELKGAFTVEKAQLMSGGSSSERVDEDVNADIHIPLLLKAIERGAGAFGPGALIEIADGGQISAKAFLASCAPTITSNDDVLSEFINQKLKGDDDLQVRLGAQELLHVATKKEFQLGGLAGSIGVSSILGSAWELGASELLKNAIFGKNFSPSQYALQLAGIDSVPPFIIEAMDSFCVLVIIKGMKGELWSMKDLLPKALKAGAISSAMSFPNNVLQYAGFKSRVADLAANSITTEAAIFGAASGIPPEVKESEELMRAGLFQSMKDGVMAHPGEGMDTKETIERMTRHALDIAPGESTAVKSMGLAAIVGMIPLIASSKATGLVSEQILRIFRNAVFNPIEAIALNALALGGRVNVPGLFDSDNAKHARVAQTILARASQHMEAGDREISAEELHQMLAPRSEFLRHVGSAIVNGMNASFEAIPALVRKLGYGEAPLAERIPYQDLAVPDTSRQPAP</sequence>
<comment type="function">
    <text evidence="3">Effector protein involved in non-host recognition and able to elicit hypersensitive response (HR).</text>
</comment>
<comment type="subcellular location">
    <subcellularLocation>
        <location>Secreted</location>
    </subcellularLocation>
    <text evidence="1">Secreted via type III secretion system (T3SS).</text>
</comment>
<keyword id="KW-0928">Hypersensitive response elicitation</keyword>
<keyword id="KW-0964">Secreted</keyword>
<keyword id="KW-0843">Virulence</keyword>
<proteinExistence type="inferred from homology"/>
<name>AVRD1_PSESH</name>
<accession>Q9F3T6</accession>
<organism>
    <name type="scientific">Pseudomonas savastanoi pv. phaseolicola</name>
    <name type="common">Pseudomonas syringae pv. phaseolicola</name>
    <dbReference type="NCBI Taxonomy" id="319"/>
    <lineage>
        <taxon>Bacteria</taxon>
        <taxon>Pseudomonadati</taxon>
        <taxon>Pseudomonadota</taxon>
        <taxon>Gammaproteobacteria</taxon>
        <taxon>Pseudomonadales</taxon>
        <taxon>Pseudomonadaceae</taxon>
        <taxon>Pseudomonas</taxon>
    </lineage>
</organism>